<feature type="chain" id="PRO_0000308827" description="DNA-directed RNA polymerase subunit beta'">
    <location>
        <begin position="1"/>
        <end position="1492"/>
    </location>
</feature>
<feature type="binding site" evidence="1">
    <location>
        <position position="67"/>
    </location>
    <ligand>
        <name>Zn(2+)</name>
        <dbReference type="ChEBI" id="CHEBI:29105"/>
        <label>1</label>
    </ligand>
</feature>
<feature type="binding site" evidence="1">
    <location>
        <position position="69"/>
    </location>
    <ligand>
        <name>Zn(2+)</name>
        <dbReference type="ChEBI" id="CHEBI:29105"/>
        <label>1</label>
    </ligand>
</feature>
<feature type="binding site" evidence="1">
    <location>
        <position position="82"/>
    </location>
    <ligand>
        <name>Zn(2+)</name>
        <dbReference type="ChEBI" id="CHEBI:29105"/>
        <label>1</label>
    </ligand>
</feature>
<feature type="binding site" evidence="1">
    <location>
        <position position="85"/>
    </location>
    <ligand>
        <name>Zn(2+)</name>
        <dbReference type="ChEBI" id="CHEBI:29105"/>
        <label>1</label>
    </ligand>
</feature>
<feature type="binding site" evidence="1">
    <location>
        <position position="499"/>
    </location>
    <ligand>
        <name>Mg(2+)</name>
        <dbReference type="ChEBI" id="CHEBI:18420"/>
    </ligand>
</feature>
<feature type="binding site" evidence="1">
    <location>
        <position position="501"/>
    </location>
    <ligand>
        <name>Mg(2+)</name>
        <dbReference type="ChEBI" id="CHEBI:18420"/>
    </ligand>
</feature>
<feature type="binding site" evidence="1">
    <location>
        <position position="503"/>
    </location>
    <ligand>
        <name>Mg(2+)</name>
        <dbReference type="ChEBI" id="CHEBI:18420"/>
    </ligand>
</feature>
<feature type="binding site" evidence="1">
    <location>
        <position position="867"/>
    </location>
    <ligand>
        <name>Zn(2+)</name>
        <dbReference type="ChEBI" id="CHEBI:29105"/>
        <label>2</label>
    </ligand>
</feature>
<feature type="binding site" evidence="1">
    <location>
        <position position="943"/>
    </location>
    <ligand>
        <name>Zn(2+)</name>
        <dbReference type="ChEBI" id="CHEBI:29105"/>
        <label>2</label>
    </ligand>
</feature>
<feature type="binding site" evidence="1">
    <location>
        <position position="950"/>
    </location>
    <ligand>
        <name>Zn(2+)</name>
        <dbReference type="ChEBI" id="CHEBI:29105"/>
        <label>2</label>
    </ligand>
</feature>
<feature type="binding site" evidence="1">
    <location>
        <position position="953"/>
    </location>
    <ligand>
        <name>Zn(2+)</name>
        <dbReference type="ChEBI" id="CHEBI:29105"/>
        <label>2</label>
    </ligand>
</feature>
<organism>
    <name type="scientific">Chlorobium phaeobacteroides (strain DSM 266 / SMG 266 / 2430)</name>
    <dbReference type="NCBI Taxonomy" id="290317"/>
    <lineage>
        <taxon>Bacteria</taxon>
        <taxon>Pseudomonadati</taxon>
        <taxon>Chlorobiota</taxon>
        <taxon>Chlorobiia</taxon>
        <taxon>Chlorobiales</taxon>
        <taxon>Chlorobiaceae</taxon>
        <taxon>Chlorobium/Pelodictyon group</taxon>
        <taxon>Chlorobium</taxon>
    </lineage>
</organism>
<protein>
    <recommendedName>
        <fullName evidence="1">DNA-directed RNA polymerase subunit beta'</fullName>
        <shortName evidence="1">RNAP subunit beta'</shortName>
        <ecNumber evidence="1">2.7.7.6</ecNumber>
    </recommendedName>
    <alternativeName>
        <fullName evidence="1">RNA polymerase subunit beta'</fullName>
    </alternativeName>
    <alternativeName>
        <fullName evidence="1">Transcriptase subunit beta'</fullName>
    </alternativeName>
</protein>
<proteinExistence type="inferred from homology"/>
<name>RPOC_CHLPD</name>
<reference key="1">
    <citation type="submission" date="2006-12" db="EMBL/GenBank/DDBJ databases">
        <title>Complete sequence of Chlorobium phaeobacteroides DSM 266.</title>
        <authorList>
            <consortium name="US DOE Joint Genome Institute"/>
            <person name="Copeland A."/>
            <person name="Lucas S."/>
            <person name="Lapidus A."/>
            <person name="Barry K."/>
            <person name="Detter J.C."/>
            <person name="Glavina del Rio T."/>
            <person name="Hammon N."/>
            <person name="Israni S."/>
            <person name="Pitluck S."/>
            <person name="Goltsman E."/>
            <person name="Schmutz J."/>
            <person name="Larimer F."/>
            <person name="Land M."/>
            <person name="Hauser L."/>
            <person name="Mikhailova N."/>
            <person name="Li T."/>
            <person name="Overmann J."/>
            <person name="Bryant D.A."/>
            <person name="Richardson P."/>
        </authorList>
    </citation>
    <scope>NUCLEOTIDE SEQUENCE [LARGE SCALE GENOMIC DNA]</scope>
    <source>
        <strain>DSM 266 / SMG 266 / 2430</strain>
    </source>
</reference>
<comment type="function">
    <text evidence="1">DNA-dependent RNA polymerase catalyzes the transcription of DNA into RNA using the four ribonucleoside triphosphates as substrates.</text>
</comment>
<comment type="catalytic activity">
    <reaction evidence="1">
        <text>RNA(n) + a ribonucleoside 5'-triphosphate = RNA(n+1) + diphosphate</text>
        <dbReference type="Rhea" id="RHEA:21248"/>
        <dbReference type="Rhea" id="RHEA-COMP:14527"/>
        <dbReference type="Rhea" id="RHEA-COMP:17342"/>
        <dbReference type="ChEBI" id="CHEBI:33019"/>
        <dbReference type="ChEBI" id="CHEBI:61557"/>
        <dbReference type="ChEBI" id="CHEBI:140395"/>
        <dbReference type="EC" id="2.7.7.6"/>
    </reaction>
</comment>
<comment type="cofactor">
    <cofactor evidence="1">
        <name>Mg(2+)</name>
        <dbReference type="ChEBI" id="CHEBI:18420"/>
    </cofactor>
    <text evidence="1">Binds 1 Mg(2+) ion per subunit.</text>
</comment>
<comment type="cofactor">
    <cofactor evidence="1">
        <name>Zn(2+)</name>
        <dbReference type="ChEBI" id="CHEBI:29105"/>
    </cofactor>
    <text evidence="1">Binds 2 Zn(2+) ions per subunit.</text>
</comment>
<comment type="subunit">
    <text evidence="1">The RNAP catalytic core consists of 2 alpha, 1 beta, 1 beta' and 1 omega subunit. When a sigma factor is associated with the core the holoenzyme is formed, which can initiate transcription.</text>
</comment>
<comment type="similarity">
    <text evidence="1">Belongs to the RNA polymerase beta' chain family.</text>
</comment>
<dbReference type="EC" id="2.7.7.6" evidence="1"/>
<dbReference type="EMBL" id="CP000492">
    <property type="protein sequence ID" value="ABL64301.1"/>
    <property type="molecule type" value="Genomic_DNA"/>
</dbReference>
<dbReference type="RefSeq" id="WP_011744141.1">
    <property type="nucleotide sequence ID" value="NC_008639.1"/>
</dbReference>
<dbReference type="SMR" id="A1BD24"/>
<dbReference type="STRING" id="290317.Cpha266_0234"/>
<dbReference type="KEGG" id="cph:Cpha266_0234"/>
<dbReference type="eggNOG" id="COG0086">
    <property type="taxonomic scope" value="Bacteria"/>
</dbReference>
<dbReference type="HOGENOM" id="CLU_000524_3_1_10"/>
<dbReference type="OrthoDB" id="9815296at2"/>
<dbReference type="Proteomes" id="UP000008701">
    <property type="component" value="Chromosome"/>
</dbReference>
<dbReference type="GO" id="GO:0000428">
    <property type="term" value="C:DNA-directed RNA polymerase complex"/>
    <property type="evidence" value="ECO:0007669"/>
    <property type="project" value="UniProtKB-KW"/>
</dbReference>
<dbReference type="GO" id="GO:0003677">
    <property type="term" value="F:DNA binding"/>
    <property type="evidence" value="ECO:0007669"/>
    <property type="project" value="UniProtKB-UniRule"/>
</dbReference>
<dbReference type="GO" id="GO:0003899">
    <property type="term" value="F:DNA-directed RNA polymerase activity"/>
    <property type="evidence" value="ECO:0007669"/>
    <property type="project" value="UniProtKB-UniRule"/>
</dbReference>
<dbReference type="GO" id="GO:0000287">
    <property type="term" value="F:magnesium ion binding"/>
    <property type="evidence" value="ECO:0007669"/>
    <property type="project" value="UniProtKB-UniRule"/>
</dbReference>
<dbReference type="GO" id="GO:0008270">
    <property type="term" value="F:zinc ion binding"/>
    <property type="evidence" value="ECO:0007669"/>
    <property type="project" value="UniProtKB-UniRule"/>
</dbReference>
<dbReference type="GO" id="GO:0006351">
    <property type="term" value="P:DNA-templated transcription"/>
    <property type="evidence" value="ECO:0007669"/>
    <property type="project" value="UniProtKB-UniRule"/>
</dbReference>
<dbReference type="CDD" id="cd02655">
    <property type="entry name" value="RNAP_beta'_C"/>
    <property type="match status" value="1"/>
</dbReference>
<dbReference type="CDD" id="cd01609">
    <property type="entry name" value="RNAP_beta'_N"/>
    <property type="match status" value="1"/>
</dbReference>
<dbReference type="FunFam" id="1.10.150.390:FF:000002">
    <property type="entry name" value="DNA-directed RNA polymerase subunit beta"/>
    <property type="match status" value="1"/>
</dbReference>
<dbReference type="Gene3D" id="1.10.132.30">
    <property type="match status" value="1"/>
</dbReference>
<dbReference type="Gene3D" id="1.10.150.390">
    <property type="match status" value="1"/>
</dbReference>
<dbReference type="Gene3D" id="1.10.1790.20">
    <property type="match status" value="1"/>
</dbReference>
<dbReference type="Gene3D" id="1.10.40.90">
    <property type="match status" value="1"/>
</dbReference>
<dbReference type="Gene3D" id="2.40.40.20">
    <property type="match status" value="1"/>
</dbReference>
<dbReference type="Gene3D" id="2.40.50.100">
    <property type="match status" value="3"/>
</dbReference>
<dbReference type="Gene3D" id="4.10.860.120">
    <property type="entry name" value="RNA polymerase II, clamp domain"/>
    <property type="match status" value="1"/>
</dbReference>
<dbReference type="Gene3D" id="1.10.274.100">
    <property type="entry name" value="RNA polymerase Rpb1, domain 3"/>
    <property type="match status" value="1"/>
</dbReference>
<dbReference type="HAMAP" id="MF_01322">
    <property type="entry name" value="RNApol_bact_RpoC"/>
    <property type="match status" value="1"/>
</dbReference>
<dbReference type="InterPro" id="IPR045867">
    <property type="entry name" value="DNA-dir_RpoC_beta_prime"/>
</dbReference>
<dbReference type="InterPro" id="IPR012754">
    <property type="entry name" value="DNA-dir_RpoC_beta_prime_bact"/>
</dbReference>
<dbReference type="InterPro" id="IPR000722">
    <property type="entry name" value="RNA_pol_asu"/>
</dbReference>
<dbReference type="InterPro" id="IPR006592">
    <property type="entry name" value="RNA_pol_N"/>
</dbReference>
<dbReference type="InterPro" id="IPR007080">
    <property type="entry name" value="RNA_pol_Rpb1_1"/>
</dbReference>
<dbReference type="InterPro" id="IPR007066">
    <property type="entry name" value="RNA_pol_Rpb1_3"/>
</dbReference>
<dbReference type="InterPro" id="IPR042102">
    <property type="entry name" value="RNA_pol_Rpb1_3_sf"/>
</dbReference>
<dbReference type="InterPro" id="IPR007083">
    <property type="entry name" value="RNA_pol_Rpb1_4"/>
</dbReference>
<dbReference type="InterPro" id="IPR007081">
    <property type="entry name" value="RNA_pol_Rpb1_5"/>
</dbReference>
<dbReference type="InterPro" id="IPR044893">
    <property type="entry name" value="RNA_pol_Rpb1_clamp_domain"/>
</dbReference>
<dbReference type="InterPro" id="IPR038120">
    <property type="entry name" value="Rpb1_funnel_sf"/>
</dbReference>
<dbReference type="NCBIfam" id="TIGR02386">
    <property type="entry name" value="rpoC_TIGR"/>
    <property type="match status" value="1"/>
</dbReference>
<dbReference type="PANTHER" id="PTHR19376">
    <property type="entry name" value="DNA-DIRECTED RNA POLYMERASE"/>
    <property type="match status" value="1"/>
</dbReference>
<dbReference type="PANTHER" id="PTHR19376:SF54">
    <property type="entry name" value="DNA-DIRECTED RNA POLYMERASE SUBUNIT BETA"/>
    <property type="match status" value="1"/>
</dbReference>
<dbReference type="Pfam" id="PF04997">
    <property type="entry name" value="RNA_pol_Rpb1_1"/>
    <property type="match status" value="1"/>
</dbReference>
<dbReference type="Pfam" id="PF00623">
    <property type="entry name" value="RNA_pol_Rpb1_2"/>
    <property type="match status" value="1"/>
</dbReference>
<dbReference type="Pfam" id="PF04983">
    <property type="entry name" value="RNA_pol_Rpb1_3"/>
    <property type="match status" value="1"/>
</dbReference>
<dbReference type="Pfam" id="PF05000">
    <property type="entry name" value="RNA_pol_Rpb1_4"/>
    <property type="match status" value="1"/>
</dbReference>
<dbReference type="Pfam" id="PF04998">
    <property type="entry name" value="RNA_pol_Rpb1_5"/>
    <property type="match status" value="1"/>
</dbReference>
<dbReference type="SMART" id="SM00663">
    <property type="entry name" value="RPOLA_N"/>
    <property type="match status" value="1"/>
</dbReference>
<dbReference type="SUPFAM" id="SSF64484">
    <property type="entry name" value="beta and beta-prime subunits of DNA dependent RNA-polymerase"/>
    <property type="match status" value="1"/>
</dbReference>
<sequence>MIFSQGASPLKGDFSKIKFSIASPESILAHSRGEVLKPETINYRTFKPERDGLMCEKIFGPTKDWECYCGKYKRVRYKGIICDRCGVEVTTKSVRRERMGHISLAVPVVHTWFFRSVPSKIGALLDLSTKELERIIYYEVYVVINPGEPGAKQGIKKLDRLTEEQYFQIITEYEDNQDLDDHDSDKFVAKMGGEAIRLLLKSIDLNETAIHLRKVLKESSSEQKRADALKRLKVVEAFRKSYEPQKKTRKKAVGLFPEDELPEPYVFEGNKPEYMVMEVVPVIPPELRPLVPLEGGRFATSDLNDLYRRVIIRNNRLKKLIDIRAPEVILRNEKRMLQEAVDALFDNSRKANAVKTGESNRPLKSLSDALKGKQGRFRQNLLGKRVDYSGRSVIVVGPELKLHECGLPKSMAIELFQPFVIRRLVERGIAKSVKSAKKLIDKKDQVVWDVLEKVIDGRPVLLNRAPTLHRLGIQAFQPVLIEGKAIQIHPLVCTAFNADFDGDQMAVHVPLSQEAQLEAALLMLSSHNLILPQSGKPVTVPSQDMVLGMYYLTKSRPGDPGEGRIFYSDEDVLIAYNEDRIGLHAQIFVHFNGAVDQKFDPLRVLDTIVDPKSEKYTWLKSQLEKKTILLTTVGRVIFNQNVPDSIGFINRVIDKKVAKELIGRLSSDVGNVETAKFLDNIKEVGFHYAMKGGLSVGLSDAIVPDTKVRHIKNAQKDSTKVVKEYNRGTLTDNERYNQIVDVWQKTSNIVAEESYQKLKKDREGFNPLYMMLDSGARGSREQVRQLTGMRGLIARPQKSMSGQPGEIIENPIISNLKEGLTVLEYFISTHGARKGLSDTSLKTADAGYLTRRLHDVAQDVIVTIEDCGTTRGLHVYRNIEEETSGQIKFREKIRGRVAARDIYDTLNNNVIVKAGEIITEELGDLIQETAGVEEAEIRSVLTCESKIGICSKCYGTNLSVHQIVEIGEAVGVIAAQSIGEPGTQLTLRTFHQGGTAQGGISETETKAFYEGQLEFEDLKTVEHSAITEDGVEEIRIIVVQKNGKINIVDPDSGKILKRYVVPHGAHLHCNAKALVKKDQVLFSSEPNSTQIIAELHGRVKFADIEKGVTYKEEVDPQTGFAQHTIINWRSKLRANETREPRVLIIDESGEVRKNYPVPIKSNLYVEDGQKIVPGDIIAKVPRNLDRAGGDITAGLPKVTELFEARIPSDPAIVSEIDGYVSFGSQRRSSKEIKVKNDFGEEKVYYVQVGKHVLANEGDEVKAGDAMTDGAVSPQDILRIQGPNAVQQYLVNEIQKVYQINAGVEINDKHLEVIVRQMLQKVRVEEPGDTELLPGDLIDRSAFVEANNNVAEKVRVTEKGDAPSRIQEGQLYKTRDITKLNRELRKNSKNLVAFEPALQATSHPVLLGITSAALQTESVISAASFQETTKVLTDAAVAGKIDYLAGLKENVIVGKLIPAGTGLKRYRNLTLTGESVETISHDASDDASTQNGI</sequence>
<gene>
    <name evidence="1" type="primary">rpoC</name>
    <name type="ordered locus">Cpha266_0234</name>
</gene>
<accession>A1BD24</accession>
<evidence type="ECO:0000255" key="1">
    <source>
        <dbReference type="HAMAP-Rule" id="MF_01322"/>
    </source>
</evidence>
<keyword id="KW-0240">DNA-directed RNA polymerase</keyword>
<keyword id="KW-0460">Magnesium</keyword>
<keyword id="KW-0479">Metal-binding</keyword>
<keyword id="KW-0548">Nucleotidyltransferase</keyword>
<keyword id="KW-1185">Reference proteome</keyword>
<keyword id="KW-0804">Transcription</keyword>
<keyword id="KW-0808">Transferase</keyword>
<keyword id="KW-0862">Zinc</keyword>